<protein>
    <recommendedName>
        <fullName evidence="1">Serine--tRNA ligase</fullName>
        <ecNumber evidence="1">6.1.1.11</ecNumber>
    </recommendedName>
    <alternativeName>
        <fullName evidence="1">Seryl-tRNA synthetase</fullName>
        <shortName evidence="1">SerRS</shortName>
    </alternativeName>
    <alternativeName>
        <fullName evidence="1">Seryl-tRNA(Ser/Sec) synthetase</fullName>
    </alternativeName>
</protein>
<sequence>MLDIKWIRENAGVLDNALAKRGAEPLSASLIALDERRRTVLQSLQEMQSRRNAASKEIGAAMAQKNSELAEKLKAEVAELKDALPAAEEESRRMEAELTDILSRIPNVPLEDVPVGPDESGNVVKRLVGSKPTWNHKPLEHFEIGEGLGFMDFEGAARIAGSRFTILKGQLARLERALGQFMLDLHTQEHGYIEVQPPLLVRDDAMYGTGQLPKFAEDLFRTTDGRWLIPTAEVPLTNMVREQILEGEKLPLRFTALTPCFRSEAGSAGRDTRGMLRQHQFNKVELVSLTDAETSVDEHERMTACAEEVLKRLGLHYRVMTLCTGDMGFGARKTYDLEVWLPGQDAYREISSCSVCGDFQARRMNARYRSKEEKGTKFVHTLNGSGVAVGRALIAVIENYLNEDGSVSVPEVLVPYMGGLRRVEKAA</sequence>
<proteinExistence type="inferred from homology"/>
<comment type="function">
    <text evidence="1">Catalyzes the attachment of serine to tRNA(Ser). Is also able to aminoacylate tRNA(Sec) with serine, to form the misacylated tRNA L-seryl-tRNA(Sec), which will be further converted into selenocysteinyl-tRNA(Sec).</text>
</comment>
<comment type="catalytic activity">
    <reaction evidence="1">
        <text>tRNA(Ser) + L-serine + ATP = L-seryl-tRNA(Ser) + AMP + diphosphate + H(+)</text>
        <dbReference type="Rhea" id="RHEA:12292"/>
        <dbReference type="Rhea" id="RHEA-COMP:9669"/>
        <dbReference type="Rhea" id="RHEA-COMP:9703"/>
        <dbReference type="ChEBI" id="CHEBI:15378"/>
        <dbReference type="ChEBI" id="CHEBI:30616"/>
        <dbReference type="ChEBI" id="CHEBI:33019"/>
        <dbReference type="ChEBI" id="CHEBI:33384"/>
        <dbReference type="ChEBI" id="CHEBI:78442"/>
        <dbReference type="ChEBI" id="CHEBI:78533"/>
        <dbReference type="ChEBI" id="CHEBI:456215"/>
        <dbReference type="EC" id="6.1.1.11"/>
    </reaction>
</comment>
<comment type="catalytic activity">
    <reaction evidence="1">
        <text>tRNA(Sec) + L-serine + ATP = L-seryl-tRNA(Sec) + AMP + diphosphate + H(+)</text>
        <dbReference type="Rhea" id="RHEA:42580"/>
        <dbReference type="Rhea" id="RHEA-COMP:9742"/>
        <dbReference type="Rhea" id="RHEA-COMP:10128"/>
        <dbReference type="ChEBI" id="CHEBI:15378"/>
        <dbReference type="ChEBI" id="CHEBI:30616"/>
        <dbReference type="ChEBI" id="CHEBI:33019"/>
        <dbReference type="ChEBI" id="CHEBI:33384"/>
        <dbReference type="ChEBI" id="CHEBI:78442"/>
        <dbReference type="ChEBI" id="CHEBI:78533"/>
        <dbReference type="ChEBI" id="CHEBI:456215"/>
        <dbReference type="EC" id="6.1.1.11"/>
    </reaction>
</comment>
<comment type="pathway">
    <text evidence="1">Aminoacyl-tRNA biosynthesis; selenocysteinyl-tRNA(Sec) biosynthesis; L-seryl-tRNA(Sec) from L-serine and tRNA(Sec): step 1/1.</text>
</comment>
<comment type="subunit">
    <text evidence="1">Homodimer. The tRNA molecule binds across the dimer.</text>
</comment>
<comment type="subcellular location">
    <subcellularLocation>
        <location evidence="1">Cytoplasm</location>
    </subcellularLocation>
</comment>
<comment type="domain">
    <text evidence="1">Consists of two distinct domains, a catalytic core and a N-terminal extension that is involved in tRNA binding.</text>
</comment>
<comment type="similarity">
    <text evidence="1">Belongs to the class-II aminoacyl-tRNA synthetase family. Type-1 seryl-tRNA synthetase subfamily.</text>
</comment>
<feature type="chain" id="PRO_1000199499" description="Serine--tRNA ligase">
    <location>
        <begin position="1"/>
        <end position="427"/>
    </location>
</feature>
<feature type="binding site" evidence="1">
    <location>
        <begin position="231"/>
        <end position="233"/>
    </location>
    <ligand>
        <name>L-serine</name>
        <dbReference type="ChEBI" id="CHEBI:33384"/>
    </ligand>
</feature>
<feature type="binding site" evidence="1">
    <location>
        <begin position="262"/>
        <end position="264"/>
    </location>
    <ligand>
        <name>ATP</name>
        <dbReference type="ChEBI" id="CHEBI:30616"/>
    </ligand>
</feature>
<feature type="binding site" evidence="1">
    <location>
        <position position="285"/>
    </location>
    <ligand>
        <name>L-serine</name>
        <dbReference type="ChEBI" id="CHEBI:33384"/>
    </ligand>
</feature>
<feature type="binding site" evidence="1">
    <location>
        <begin position="349"/>
        <end position="352"/>
    </location>
    <ligand>
        <name>ATP</name>
        <dbReference type="ChEBI" id="CHEBI:30616"/>
    </ligand>
</feature>
<feature type="binding site" evidence="1">
    <location>
        <position position="385"/>
    </location>
    <ligand>
        <name>L-serine</name>
        <dbReference type="ChEBI" id="CHEBI:33384"/>
    </ligand>
</feature>
<reference key="1">
    <citation type="journal article" date="2009" name="Appl. Environ. Microbiol.">
        <title>Rhizobium sp. strain NGR234 possesses a remarkable number of secretion systems.</title>
        <authorList>
            <person name="Schmeisser C."/>
            <person name="Liesegang H."/>
            <person name="Krysciak D."/>
            <person name="Bakkou N."/>
            <person name="Le Quere A."/>
            <person name="Wollherr A."/>
            <person name="Heinemeyer I."/>
            <person name="Morgenstern B."/>
            <person name="Pommerening-Roeser A."/>
            <person name="Flores M."/>
            <person name="Palacios R."/>
            <person name="Brenner S."/>
            <person name="Gottschalk G."/>
            <person name="Schmitz R.A."/>
            <person name="Broughton W.J."/>
            <person name="Perret X."/>
            <person name="Strittmatter A.W."/>
            <person name="Streit W.R."/>
        </authorList>
    </citation>
    <scope>NUCLEOTIDE SEQUENCE [LARGE SCALE GENOMIC DNA]</scope>
    <source>
        <strain>NBRC 101917 / NGR234</strain>
    </source>
</reference>
<name>SYS_SINFN</name>
<evidence type="ECO:0000255" key="1">
    <source>
        <dbReference type="HAMAP-Rule" id="MF_00176"/>
    </source>
</evidence>
<accession>C3MBU2</accession>
<dbReference type="EC" id="6.1.1.11" evidence="1"/>
<dbReference type="EMBL" id="CP001389">
    <property type="protein sequence ID" value="ACP25154.1"/>
    <property type="molecule type" value="Genomic_DNA"/>
</dbReference>
<dbReference type="RefSeq" id="WP_012707930.1">
    <property type="nucleotide sequence ID" value="NC_012587.1"/>
</dbReference>
<dbReference type="RefSeq" id="YP_002825907.1">
    <property type="nucleotide sequence ID" value="NC_012587.1"/>
</dbReference>
<dbReference type="SMR" id="C3MBU2"/>
<dbReference type="STRING" id="394.NGR_c13740"/>
<dbReference type="KEGG" id="rhi:NGR_c13740"/>
<dbReference type="PATRIC" id="fig|394.7.peg.4194"/>
<dbReference type="eggNOG" id="COG0172">
    <property type="taxonomic scope" value="Bacteria"/>
</dbReference>
<dbReference type="HOGENOM" id="CLU_023797_1_1_5"/>
<dbReference type="OrthoDB" id="9804647at2"/>
<dbReference type="UniPathway" id="UPA00906">
    <property type="reaction ID" value="UER00895"/>
</dbReference>
<dbReference type="Proteomes" id="UP000001054">
    <property type="component" value="Chromosome"/>
</dbReference>
<dbReference type="GO" id="GO:0005737">
    <property type="term" value="C:cytoplasm"/>
    <property type="evidence" value="ECO:0007669"/>
    <property type="project" value="UniProtKB-SubCell"/>
</dbReference>
<dbReference type="GO" id="GO:0005524">
    <property type="term" value="F:ATP binding"/>
    <property type="evidence" value="ECO:0007669"/>
    <property type="project" value="UniProtKB-UniRule"/>
</dbReference>
<dbReference type="GO" id="GO:0004828">
    <property type="term" value="F:serine-tRNA ligase activity"/>
    <property type="evidence" value="ECO:0007669"/>
    <property type="project" value="UniProtKB-UniRule"/>
</dbReference>
<dbReference type="GO" id="GO:0016260">
    <property type="term" value="P:selenocysteine biosynthetic process"/>
    <property type="evidence" value="ECO:0007669"/>
    <property type="project" value="UniProtKB-UniRule"/>
</dbReference>
<dbReference type="GO" id="GO:0006434">
    <property type="term" value="P:seryl-tRNA aminoacylation"/>
    <property type="evidence" value="ECO:0007669"/>
    <property type="project" value="UniProtKB-UniRule"/>
</dbReference>
<dbReference type="CDD" id="cd00770">
    <property type="entry name" value="SerRS_core"/>
    <property type="match status" value="1"/>
</dbReference>
<dbReference type="Gene3D" id="3.30.930.10">
    <property type="entry name" value="Bira Bifunctional Protein, Domain 2"/>
    <property type="match status" value="1"/>
</dbReference>
<dbReference type="Gene3D" id="1.10.287.40">
    <property type="entry name" value="Serine-tRNA synthetase, tRNA binding domain"/>
    <property type="match status" value="1"/>
</dbReference>
<dbReference type="HAMAP" id="MF_00176">
    <property type="entry name" value="Ser_tRNA_synth_type1"/>
    <property type="match status" value="1"/>
</dbReference>
<dbReference type="InterPro" id="IPR002314">
    <property type="entry name" value="aa-tRNA-synt_IIb"/>
</dbReference>
<dbReference type="InterPro" id="IPR006195">
    <property type="entry name" value="aa-tRNA-synth_II"/>
</dbReference>
<dbReference type="InterPro" id="IPR045864">
    <property type="entry name" value="aa-tRNA-synth_II/BPL/LPL"/>
</dbReference>
<dbReference type="InterPro" id="IPR002317">
    <property type="entry name" value="Ser-tRNA-ligase_type_1"/>
</dbReference>
<dbReference type="InterPro" id="IPR015866">
    <property type="entry name" value="Ser-tRNA-synth_1_N"/>
</dbReference>
<dbReference type="InterPro" id="IPR042103">
    <property type="entry name" value="SerRS_1_N_sf"/>
</dbReference>
<dbReference type="InterPro" id="IPR033729">
    <property type="entry name" value="SerRS_core"/>
</dbReference>
<dbReference type="InterPro" id="IPR010978">
    <property type="entry name" value="tRNA-bd_arm"/>
</dbReference>
<dbReference type="NCBIfam" id="TIGR00414">
    <property type="entry name" value="serS"/>
    <property type="match status" value="1"/>
</dbReference>
<dbReference type="PANTHER" id="PTHR43697:SF1">
    <property type="entry name" value="SERINE--TRNA LIGASE"/>
    <property type="match status" value="1"/>
</dbReference>
<dbReference type="PANTHER" id="PTHR43697">
    <property type="entry name" value="SERYL-TRNA SYNTHETASE"/>
    <property type="match status" value="1"/>
</dbReference>
<dbReference type="Pfam" id="PF02403">
    <property type="entry name" value="Seryl_tRNA_N"/>
    <property type="match status" value="1"/>
</dbReference>
<dbReference type="Pfam" id="PF00587">
    <property type="entry name" value="tRNA-synt_2b"/>
    <property type="match status" value="1"/>
</dbReference>
<dbReference type="PIRSF" id="PIRSF001529">
    <property type="entry name" value="Ser-tRNA-synth_IIa"/>
    <property type="match status" value="1"/>
</dbReference>
<dbReference type="PRINTS" id="PR00981">
    <property type="entry name" value="TRNASYNTHSER"/>
</dbReference>
<dbReference type="SUPFAM" id="SSF55681">
    <property type="entry name" value="Class II aaRS and biotin synthetases"/>
    <property type="match status" value="1"/>
</dbReference>
<dbReference type="SUPFAM" id="SSF46589">
    <property type="entry name" value="tRNA-binding arm"/>
    <property type="match status" value="1"/>
</dbReference>
<dbReference type="PROSITE" id="PS50862">
    <property type="entry name" value="AA_TRNA_LIGASE_II"/>
    <property type="match status" value="1"/>
</dbReference>
<organism>
    <name type="scientific">Sinorhizobium fredii (strain NBRC 101917 / NGR234)</name>
    <dbReference type="NCBI Taxonomy" id="394"/>
    <lineage>
        <taxon>Bacteria</taxon>
        <taxon>Pseudomonadati</taxon>
        <taxon>Pseudomonadota</taxon>
        <taxon>Alphaproteobacteria</taxon>
        <taxon>Hyphomicrobiales</taxon>
        <taxon>Rhizobiaceae</taxon>
        <taxon>Sinorhizobium/Ensifer group</taxon>
        <taxon>Sinorhizobium</taxon>
    </lineage>
</organism>
<keyword id="KW-0030">Aminoacyl-tRNA synthetase</keyword>
<keyword id="KW-0067">ATP-binding</keyword>
<keyword id="KW-0963">Cytoplasm</keyword>
<keyword id="KW-0436">Ligase</keyword>
<keyword id="KW-0547">Nucleotide-binding</keyword>
<keyword id="KW-0648">Protein biosynthesis</keyword>
<keyword id="KW-1185">Reference proteome</keyword>
<gene>
    <name evidence="1" type="primary">serS</name>
    <name type="ordered locus">NGR_c13740</name>
</gene>